<protein>
    <recommendedName>
        <fullName>Glyceraldehyde-3-phosphate dehydrogenase</fullName>
        <shortName>GAPDH</shortName>
        <ecNumber evidence="1">1.2.1.12</ecNumber>
    </recommendedName>
    <alternativeName>
        <fullName evidence="7">Peptidyl-cysteine S-nitrosylase GAPDH</fullName>
        <ecNumber evidence="2">2.6.99.-</ecNumber>
    </alternativeName>
</protein>
<feature type="chain" id="PRO_0000145485" description="Glyceraldehyde-3-phosphate dehydrogenase">
    <location>
        <begin position="1"/>
        <end position="333"/>
    </location>
</feature>
<feature type="region of interest" description="Interaction with WARS1" evidence="1">
    <location>
        <begin position="1"/>
        <end position="146"/>
    </location>
</feature>
<feature type="short sequence motif" description="[IL]-x-C-x-x-[DE] motif" evidence="1">
    <location>
        <begin position="243"/>
        <end position="248"/>
    </location>
</feature>
<feature type="active site" description="Nucleophile" evidence="6">
    <location>
        <position position="150"/>
    </location>
</feature>
<feature type="binding site" evidence="1">
    <location>
        <begin position="11"/>
        <end position="12"/>
    </location>
    <ligand>
        <name>NAD(+)</name>
        <dbReference type="ChEBI" id="CHEBI:57540"/>
    </ligand>
</feature>
<feature type="binding site" evidence="1">
    <location>
        <position position="33"/>
    </location>
    <ligand>
        <name>NAD(+)</name>
        <dbReference type="ChEBI" id="CHEBI:57540"/>
    </ligand>
</feature>
<feature type="binding site" evidence="1">
    <location>
        <position position="78"/>
    </location>
    <ligand>
        <name>NAD(+)</name>
        <dbReference type="ChEBI" id="CHEBI:57540"/>
    </ligand>
</feature>
<feature type="binding site" evidence="1">
    <location>
        <position position="120"/>
    </location>
    <ligand>
        <name>NAD(+)</name>
        <dbReference type="ChEBI" id="CHEBI:57540"/>
    </ligand>
</feature>
<feature type="binding site" evidence="5">
    <location>
        <begin position="149"/>
        <end position="151"/>
    </location>
    <ligand>
        <name>D-glyceraldehyde 3-phosphate</name>
        <dbReference type="ChEBI" id="CHEBI:59776"/>
    </ligand>
</feature>
<feature type="binding site" evidence="5">
    <location>
        <position position="180"/>
    </location>
    <ligand>
        <name>D-glyceraldehyde 3-phosphate</name>
        <dbReference type="ChEBI" id="CHEBI:59776"/>
    </ligand>
</feature>
<feature type="binding site" evidence="5">
    <location>
        <begin position="209"/>
        <end position="210"/>
    </location>
    <ligand>
        <name>D-glyceraldehyde 3-phosphate</name>
        <dbReference type="ChEBI" id="CHEBI:59776"/>
    </ligand>
</feature>
<feature type="binding site" evidence="5">
    <location>
        <position position="232"/>
    </location>
    <ligand>
        <name>D-glyceraldehyde 3-phosphate</name>
        <dbReference type="ChEBI" id="CHEBI:59776"/>
    </ligand>
</feature>
<feature type="binding site" evidence="1">
    <location>
        <position position="314"/>
    </location>
    <ligand>
        <name>NAD(+)</name>
        <dbReference type="ChEBI" id="CHEBI:57540"/>
    </ligand>
</feature>
<feature type="site" description="Activates thiol group during catalysis" evidence="1">
    <location>
        <position position="177"/>
    </location>
</feature>
<feature type="modified residue" description="N6,N6-dimethyllysine" evidence="1">
    <location>
        <position position="3"/>
    </location>
</feature>
<feature type="modified residue" description="Deamidated asparagine" evidence="1">
    <location>
        <position position="7"/>
    </location>
</feature>
<feature type="modified residue" description="Phosphotyrosine" evidence="1">
    <location>
        <position position="40"/>
    </location>
</feature>
<feature type="modified residue" description="N6-acetyllysine" evidence="1">
    <location>
        <position position="59"/>
    </location>
</feature>
<feature type="modified residue" description="Deamidated asparagine" evidence="1">
    <location>
        <position position="62"/>
    </location>
</feature>
<feature type="modified residue" description="N6,N6-dimethyllysine" evidence="1">
    <location>
        <position position="64"/>
    </location>
</feature>
<feature type="modified residue" description="Deamidated asparagine" evidence="1">
    <location>
        <position position="68"/>
    </location>
</feature>
<feature type="modified residue" description="Phosphothreonine" evidence="1">
    <location>
        <position position="73"/>
    </location>
</feature>
<feature type="modified residue" description="Phosphoserine" evidence="1">
    <location>
        <position position="120"/>
    </location>
</feature>
<feature type="modified residue" description="Phosphoserine" evidence="1">
    <location>
        <position position="146"/>
    </location>
</feature>
<feature type="modified residue" description="Deamidated asparagine" evidence="1">
    <location>
        <position position="147"/>
    </location>
</feature>
<feature type="modified residue" description="Phosphoserine" evidence="1">
    <location>
        <position position="149"/>
    </location>
</feature>
<feature type="modified residue" description="ADP-ribosylcysteine; by autocatalysis; in irreversibly inhibited form" evidence="2">
    <location>
        <position position="150"/>
    </location>
</feature>
<feature type="modified residue" description="Cysteine persulfide" evidence="4">
    <location>
        <position position="150"/>
    </location>
</feature>
<feature type="modified residue" description="S-(2-succinyl)cysteine" evidence="2">
    <location>
        <position position="150"/>
    </location>
</feature>
<feature type="modified residue" description="S-nitrosocysteine; in reversibly inhibited form" evidence="2">
    <location>
        <position position="150"/>
    </location>
</feature>
<feature type="modified residue" description="Phosphothreonine" evidence="1">
    <location>
        <position position="151"/>
    </location>
</feature>
<feature type="modified residue" description="Deamidated asparagine" evidence="1">
    <location>
        <position position="153"/>
    </location>
</feature>
<feature type="modified residue" description="Phosphothreonine" evidence="1">
    <location>
        <position position="175"/>
    </location>
</feature>
<feature type="modified residue" description="Phosphothreonine" evidence="1">
    <location>
        <position position="180"/>
    </location>
</feature>
<feature type="modified residue" description="Phosphothreonine" evidence="1">
    <location>
        <position position="182"/>
    </location>
</feature>
<feature type="modified residue" description="N6,N6-dimethyllysine; alternate" evidence="1">
    <location>
        <position position="192"/>
    </location>
</feature>
<feature type="modified residue" description="N6-acetyllysine; alternate" evidence="1">
    <location>
        <position position="192"/>
    </location>
</feature>
<feature type="modified residue" description="N6-malonyllysine; alternate" evidence="1">
    <location>
        <position position="192"/>
    </location>
</feature>
<feature type="modified residue" description="Phosphothreonine" evidence="1">
    <location>
        <position position="209"/>
    </location>
</feature>
<feature type="modified residue" description="N6,N6-dimethyllysine; alternate" evidence="1">
    <location>
        <position position="213"/>
    </location>
</feature>
<feature type="modified residue" description="N6-malonyllysine; alternate" evidence="1">
    <location>
        <position position="213"/>
    </location>
</feature>
<feature type="modified residue" description="N6-acetyllysine" evidence="1">
    <location>
        <position position="217"/>
    </location>
</feature>
<feature type="modified residue" description="Deamidated asparagine" evidence="1">
    <location>
        <position position="223"/>
    </location>
</feature>
<feature type="modified residue" description="N6,N6-dimethyllysine; alternate" evidence="1">
    <location>
        <position position="225"/>
    </location>
</feature>
<feature type="modified residue" description="N6-acetyllysine; alternate" evidence="1">
    <location>
        <position position="225"/>
    </location>
</feature>
<feature type="modified residue" description="Phosphothreonine" evidence="1">
    <location>
        <position position="227"/>
    </location>
</feature>
<feature type="modified residue" description="Phosphothreonine" evidence="1">
    <location>
        <position position="235"/>
    </location>
</feature>
<feature type="modified residue" description="Phosphoserine" evidence="1">
    <location>
        <position position="239"/>
    </location>
</feature>
<feature type="modified residue" description="S-(2-succinyl)cysteine" evidence="2">
    <location>
        <position position="245"/>
    </location>
</feature>
<feature type="modified residue" description="S-nitrosocysteine" evidence="1">
    <location>
        <position position="245"/>
    </location>
</feature>
<feature type="modified residue" description="N6-acetyllysine" evidence="1">
    <location>
        <position position="252"/>
    </location>
</feature>
<feature type="modified residue" description="N6,N6-dimethyllysine" evidence="1">
    <location>
        <position position="258"/>
    </location>
</feature>
<feature type="modified residue" description="N6,N6-dimethyllysine" evidence="1">
    <location>
        <position position="261"/>
    </location>
</feature>
<feature type="modified residue" description="Phosphoserine" evidence="1">
    <location>
        <position position="310"/>
    </location>
</feature>
<feature type="modified residue" description="Deamidated asparagine" evidence="1">
    <location>
        <position position="314"/>
    </location>
</feature>
<feature type="modified residue" description="Phosphoserine" evidence="1">
    <location>
        <position position="331"/>
    </location>
</feature>
<feature type="modified residue" description="N6,N6-dimethyllysine" evidence="1">
    <location>
        <position position="332"/>
    </location>
</feature>
<feature type="cross-link" description="Glycyl lysine isopeptide (Lys-Gly) (interchain with G-Cter in SUMO2)" evidence="1">
    <location>
        <position position="184"/>
    </location>
</feature>
<reference key="1">
    <citation type="submission" date="2000-02" db="EMBL/GenBank/DDBJ databases">
        <title>Feline glyceraldehyde-3-phosphate dehydrogenase (GAPDH), complete CDS.</title>
        <authorList>
            <person name="Kitamura H."/>
            <person name="Adachi K."/>
            <person name="Ohta Y."/>
            <person name="Kido N."/>
            <person name="Hagiya T."/>
            <person name="Yasui H."/>
            <person name="Yano E."/>
            <person name="Minase K."/>
            <person name="Mae J."/>
            <person name="Tabu K."/>
            <person name="Kanehira K."/>
            <person name="Ohashi A."/>
        </authorList>
    </citation>
    <scope>NUCLEOTIDE SEQUENCE [MRNA]</scope>
    <source>
        <tissue>White adipose tissue</tissue>
    </source>
</reference>
<sequence length="333" mass="35813">MVKVGVNGFGRIGRLVTRAAFNSGKVDIVAINDPFIDLNYMVYMFQYDSTHGKFHGTVKAENGKLVINGKPITIFQERDPANIKWGDAGAEYVVESTGVFTTMEKAGAHLKGGAKRVIISAPSADAPMFVMGVNHEKYDNSLKIVSNASCTTNCLAPLAKVIHDHFGIVEGLMTTVHAITATQKTVDGPSGKLWRDGRGAAQNIIPASTGAAKAVGKVIPELNGKLTGMAFRVPTPNVSVVDLTCRLEKAAKYDDIKKVVKQASEGPLKGILGYTEDQVVSCDFNSDTHSSTFDAGAGIALNDHFVKLISWYDNEFGYSNRVVDLMAHMASKE</sequence>
<keyword id="KW-0007">Acetylation</keyword>
<keyword id="KW-0013">ADP-ribosylation</keyword>
<keyword id="KW-0053">Apoptosis</keyword>
<keyword id="KW-0963">Cytoplasm</keyword>
<keyword id="KW-0206">Cytoskeleton</keyword>
<keyword id="KW-0324">Glycolysis</keyword>
<keyword id="KW-0391">Immunity</keyword>
<keyword id="KW-0399">Innate immunity</keyword>
<keyword id="KW-1017">Isopeptide bond</keyword>
<keyword id="KW-0488">Methylation</keyword>
<keyword id="KW-0520">NAD</keyword>
<keyword id="KW-0539">Nucleus</keyword>
<keyword id="KW-0560">Oxidoreductase</keyword>
<keyword id="KW-0597">Phosphoprotein</keyword>
<keyword id="KW-1185">Reference proteome</keyword>
<keyword id="KW-0702">S-nitrosylation</keyword>
<keyword id="KW-0808">Transferase</keyword>
<keyword id="KW-0810">Translation regulation</keyword>
<keyword id="KW-0832">Ubl conjugation</keyword>
<proteinExistence type="evidence at transcript level"/>
<dbReference type="EC" id="1.2.1.12" evidence="1"/>
<dbReference type="EC" id="2.6.99.-" evidence="2"/>
<dbReference type="EMBL" id="AB038241">
    <property type="protein sequence ID" value="BAA90818.1"/>
    <property type="molecule type" value="mRNA"/>
</dbReference>
<dbReference type="RefSeq" id="NP_001009307.1">
    <property type="nucleotide sequence ID" value="NM_001009307.1"/>
</dbReference>
<dbReference type="SMR" id="Q9N2D5"/>
<dbReference type="FunCoup" id="Q9N2D5">
    <property type="interactions" value="59"/>
</dbReference>
<dbReference type="STRING" id="9685.ENSFCAP00000006382"/>
<dbReference type="PaxDb" id="9685-ENSFCAP00000006382"/>
<dbReference type="GeneID" id="493876"/>
<dbReference type="KEGG" id="fca:493876"/>
<dbReference type="CTD" id="2597"/>
<dbReference type="eggNOG" id="KOG0657">
    <property type="taxonomic scope" value="Eukaryota"/>
</dbReference>
<dbReference type="InParanoid" id="Q9N2D5"/>
<dbReference type="OrthoDB" id="9817610at2759"/>
<dbReference type="TreeFam" id="TF300533"/>
<dbReference type="UniPathway" id="UPA00109">
    <property type="reaction ID" value="UER00184"/>
</dbReference>
<dbReference type="Proteomes" id="UP000011712">
    <property type="component" value="Unplaced"/>
</dbReference>
<dbReference type="GO" id="GO:0005737">
    <property type="term" value="C:cytoplasm"/>
    <property type="evidence" value="ECO:0000250"/>
    <property type="project" value="UniProtKB"/>
</dbReference>
<dbReference type="GO" id="GO:0005829">
    <property type="term" value="C:cytosol"/>
    <property type="evidence" value="ECO:0000250"/>
    <property type="project" value="UniProtKB"/>
</dbReference>
<dbReference type="GO" id="GO:0097452">
    <property type="term" value="C:GAIT complex"/>
    <property type="evidence" value="ECO:0000250"/>
    <property type="project" value="UniProtKB"/>
</dbReference>
<dbReference type="GO" id="GO:0015630">
    <property type="term" value="C:microtubule cytoskeleton"/>
    <property type="evidence" value="ECO:0000250"/>
    <property type="project" value="UniProtKB"/>
</dbReference>
<dbReference type="GO" id="GO:0005634">
    <property type="term" value="C:nucleus"/>
    <property type="evidence" value="ECO:0000250"/>
    <property type="project" value="UniProtKB"/>
</dbReference>
<dbReference type="GO" id="GO:0004365">
    <property type="term" value="F:glyceraldehyde-3-phosphate dehydrogenase (NAD+) (phosphorylating) activity"/>
    <property type="evidence" value="ECO:0000250"/>
    <property type="project" value="UniProtKB"/>
</dbReference>
<dbReference type="GO" id="GO:0008017">
    <property type="term" value="F:microtubule binding"/>
    <property type="evidence" value="ECO:0000250"/>
    <property type="project" value="UniProtKB"/>
</dbReference>
<dbReference type="GO" id="GO:0051287">
    <property type="term" value="F:NAD binding"/>
    <property type="evidence" value="ECO:0007669"/>
    <property type="project" value="InterPro"/>
</dbReference>
<dbReference type="GO" id="GO:0050661">
    <property type="term" value="F:NADP binding"/>
    <property type="evidence" value="ECO:0007669"/>
    <property type="project" value="InterPro"/>
</dbReference>
<dbReference type="GO" id="GO:0035605">
    <property type="term" value="F:peptidyl-cysteine S-nitrosylase activity"/>
    <property type="evidence" value="ECO:0000250"/>
    <property type="project" value="UniProtKB"/>
</dbReference>
<dbReference type="GO" id="GO:0006006">
    <property type="term" value="P:glucose metabolic process"/>
    <property type="evidence" value="ECO:0007669"/>
    <property type="project" value="InterPro"/>
</dbReference>
<dbReference type="GO" id="GO:0006096">
    <property type="term" value="P:glycolytic process"/>
    <property type="evidence" value="ECO:0000318"/>
    <property type="project" value="GO_Central"/>
</dbReference>
<dbReference type="GO" id="GO:0045087">
    <property type="term" value="P:innate immune response"/>
    <property type="evidence" value="ECO:0007669"/>
    <property type="project" value="UniProtKB-KW"/>
</dbReference>
<dbReference type="GO" id="GO:0000226">
    <property type="term" value="P:microtubule cytoskeleton organization"/>
    <property type="evidence" value="ECO:0000250"/>
    <property type="project" value="UniProtKB"/>
</dbReference>
<dbReference type="GO" id="GO:0051402">
    <property type="term" value="P:neuron apoptotic process"/>
    <property type="evidence" value="ECO:0000250"/>
    <property type="project" value="UniProtKB"/>
</dbReference>
<dbReference type="GO" id="GO:0035606">
    <property type="term" value="P:peptidyl-cysteine S-trans-nitrosylation"/>
    <property type="evidence" value="ECO:0000250"/>
    <property type="project" value="UniProtKB"/>
</dbReference>
<dbReference type="GO" id="GO:0043123">
    <property type="term" value="P:positive regulation of canonical NF-kappaB signal transduction"/>
    <property type="evidence" value="ECO:0000250"/>
    <property type="project" value="UniProtKB"/>
</dbReference>
<dbReference type="GO" id="GO:0032481">
    <property type="term" value="P:positive regulation of type I interferon production"/>
    <property type="evidence" value="ECO:0000250"/>
    <property type="project" value="UniProtKB"/>
</dbReference>
<dbReference type="GO" id="GO:0050821">
    <property type="term" value="P:protein stabilization"/>
    <property type="evidence" value="ECO:0000250"/>
    <property type="project" value="UniProtKB"/>
</dbReference>
<dbReference type="GO" id="GO:0006417">
    <property type="term" value="P:regulation of translation"/>
    <property type="evidence" value="ECO:0007669"/>
    <property type="project" value="UniProtKB-KW"/>
</dbReference>
<dbReference type="CDD" id="cd18126">
    <property type="entry name" value="GAPDH_I_C"/>
    <property type="match status" value="1"/>
</dbReference>
<dbReference type="CDD" id="cd05214">
    <property type="entry name" value="GAPDH_I_N"/>
    <property type="match status" value="1"/>
</dbReference>
<dbReference type="FunFam" id="3.30.360.10:FF:000001">
    <property type="entry name" value="Glyceraldehyde-3-phosphate dehydrogenase"/>
    <property type="match status" value="1"/>
</dbReference>
<dbReference type="FunFam" id="3.40.50.720:FF:001161">
    <property type="entry name" value="Glyceraldehyde-3-phosphate dehydrogenase"/>
    <property type="match status" value="1"/>
</dbReference>
<dbReference type="Gene3D" id="3.30.360.10">
    <property type="entry name" value="Dihydrodipicolinate Reductase, domain 2"/>
    <property type="match status" value="1"/>
</dbReference>
<dbReference type="Gene3D" id="3.40.50.720">
    <property type="entry name" value="NAD(P)-binding Rossmann-like Domain"/>
    <property type="match status" value="1"/>
</dbReference>
<dbReference type="InterPro" id="IPR020831">
    <property type="entry name" value="GlycerAld/Erythrose_P_DH"/>
</dbReference>
<dbReference type="InterPro" id="IPR020830">
    <property type="entry name" value="GlycerAld_3-P_DH_AS"/>
</dbReference>
<dbReference type="InterPro" id="IPR020829">
    <property type="entry name" value="GlycerAld_3-P_DH_cat"/>
</dbReference>
<dbReference type="InterPro" id="IPR020828">
    <property type="entry name" value="GlycerAld_3-P_DH_NAD(P)-bd"/>
</dbReference>
<dbReference type="InterPro" id="IPR006424">
    <property type="entry name" value="Glyceraldehyde-3-P_DH_1"/>
</dbReference>
<dbReference type="InterPro" id="IPR036291">
    <property type="entry name" value="NAD(P)-bd_dom_sf"/>
</dbReference>
<dbReference type="NCBIfam" id="TIGR01534">
    <property type="entry name" value="GAPDH-I"/>
    <property type="match status" value="1"/>
</dbReference>
<dbReference type="PANTHER" id="PTHR10836">
    <property type="entry name" value="GLYCERALDEHYDE 3-PHOSPHATE DEHYDROGENASE"/>
    <property type="match status" value="1"/>
</dbReference>
<dbReference type="PANTHER" id="PTHR10836:SF111">
    <property type="entry name" value="GLYCERALDEHYDE-3-PHOSPHATE DEHYDROGENASE"/>
    <property type="match status" value="1"/>
</dbReference>
<dbReference type="Pfam" id="PF02800">
    <property type="entry name" value="Gp_dh_C"/>
    <property type="match status" value="1"/>
</dbReference>
<dbReference type="Pfam" id="PF00044">
    <property type="entry name" value="Gp_dh_N"/>
    <property type="match status" value="1"/>
</dbReference>
<dbReference type="PIRSF" id="PIRSF000149">
    <property type="entry name" value="GAP_DH"/>
    <property type="match status" value="1"/>
</dbReference>
<dbReference type="PRINTS" id="PR00078">
    <property type="entry name" value="G3PDHDRGNASE"/>
</dbReference>
<dbReference type="SMART" id="SM00846">
    <property type="entry name" value="Gp_dh_N"/>
    <property type="match status" value="1"/>
</dbReference>
<dbReference type="SUPFAM" id="SSF55347">
    <property type="entry name" value="Glyceraldehyde-3-phosphate dehydrogenase-like, C-terminal domain"/>
    <property type="match status" value="1"/>
</dbReference>
<dbReference type="SUPFAM" id="SSF51735">
    <property type="entry name" value="NAD(P)-binding Rossmann-fold domains"/>
    <property type="match status" value="1"/>
</dbReference>
<dbReference type="PROSITE" id="PS00071">
    <property type="entry name" value="GAPDH"/>
    <property type="match status" value="1"/>
</dbReference>
<accession>Q9N2D5</accession>
<comment type="function">
    <text evidence="1 2">Has both glyceraldehyde-3-phosphate dehydrogenase and nitrosylase activities, thereby playing a role in glycolysis and nuclear functions, respectively. Glyceraldehyde-3-phosphate dehydrogenase is a key enzyme in glycolysis that catalyzes the first step of the pathway by converting D-glyceraldehyde 3-phosphate (G3P) into 3-phospho-D-glyceroyl phosphate (By similarity). Modulates the organization and assembly of the cytoskeleton. Facilitates the CHP1-dependent microtubule and membrane associations through its ability to stimulate the binding of CHP1 to microtubules (By similarity). Component of the GAIT (gamma interferon-activated inhibitor of translation) complex which mediates interferon-gamma-induced transcript-selective translation inhibition in inflammation processes. Upon interferon-gamma treatment assembles into the GAIT complex which binds to stem loop-containing GAIT elements in the 3'-UTR of diverse inflammatory mRNAs (such as ceruplasmin) and suppresses their translation. Also plays a role in innate immunity by promoting TNF-induced NF-kappa-B activation and type I interferon production, via interaction with TRAF2 and TRAF3, respectively (By similarity). Participates in nuclear events including transcription, RNA transport, DNA replication and apoptosis. Nuclear functions are probably due to the nitrosylase activity that mediates cysteine S-nitrosylation of nuclear target proteins such as SIRT1, HDAC2 and PRKDC (By similarity).</text>
</comment>
<comment type="catalytic activity">
    <reaction evidence="1 6">
        <text>D-glyceraldehyde 3-phosphate + phosphate + NAD(+) = (2R)-3-phospho-glyceroyl phosphate + NADH + H(+)</text>
        <dbReference type="Rhea" id="RHEA:10300"/>
        <dbReference type="ChEBI" id="CHEBI:15378"/>
        <dbReference type="ChEBI" id="CHEBI:43474"/>
        <dbReference type="ChEBI" id="CHEBI:57540"/>
        <dbReference type="ChEBI" id="CHEBI:57604"/>
        <dbReference type="ChEBI" id="CHEBI:57945"/>
        <dbReference type="ChEBI" id="CHEBI:59776"/>
        <dbReference type="EC" id="1.2.1.12"/>
    </reaction>
</comment>
<comment type="catalytic activity">
    <reaction evidence="2">
        <text>S-nitroso-L-cysteinyl-[GAPDH] + L-cysteinyl-[protein] = L-cysteinyl-[GAPDH] + S-nitroso-L-cysteinyl-[protein]</text>
        <dbReference type="Rhea" id="RHEA:66684"/>
        <dbReference type="Rhea" id="RHEA-COMP:10131"/>
        <dbReference type="Rhea" id="RHEA-COMP:17089"/>
        <dbReference type="Rhea" id="RHEA-COMP:17090"/>
        <dbReference type="Rhea" id="RHEA-COMP:17091"/>
        <dbReference type="ChEBI" id="CHEBI:29950"/>
        <dbReference type="ChEBI" id="CHEBI:149494"/>
    </reaction>
    <physiologicalReaction direction="left-to-right" evidence="2">
        <dbReference type="Rhea" id="RHEA:66685"/>
    </physiologicalReaction>
</comment>
<comment type="activity regulation">
    <text evidence="2">Glyceraldehyde-3-phosphate dehydrogenase activity is inhibited by fumarate, via the formation of S-(2-succinyl)cysteine residues.</text>
</comment>
<comment type="pathway">
    <text>Carbohydrate degradation; glycolysis; pyruvate from D-glyceraldehyde 3-phosphate: step 1/5.</text>
</comment>
<comment type="subunit">
    <text evidence="1 2 3">Homotetramer (By similarity). Interacts with TPPP; the interaction is direct (By similarity). Interacts (when S-nitrosylated) with SIAH1; leading to nuclear translocation. Interacts with RILPL1/GOSPEL, leading to prevent the interaction between GAPDH and SIAH1 and prevent nuclear translocation. Interacts with CHP1; the interaction increases the binding of CHP1 with microtubules. Associates with microtubules (By similarity). Interacts with EIF1AD, USP25, PRKCI and WARS1. Interacts with phosphorylated RPL13A; inhibited by oxidatively-modified low-densitity lipoprotein (LDL(ox)). Component of the GAIT complex. Interacts with FKBP6; leading to inhibit GAPDH catalytic activity. Interacts with TRAF2, promoting TRAF2 ubiquitination. Interacts with TRAF3, promoting TRAF3 ubiquitination (By similarity).</text>
</comment>
<comment type="subcellular location">
    <subcellularLocation>
        <location evidence="2">Cytoplasm</location>
        <location evidence="2">Cytosol</location>
    </subcellularLocation>
    <subcellularLocation>
        <location evidence="2">Cytoplasm</location>
        <location evidence="2">Cytoskeleton</location>
    </subcellularLocation>
    <subcellularLocation>
        <location evidence="2">Nucleus</location>
    </subcellularLocation>
    <text evidence="2">Translocates to the nucleus following S-nitrosylation and interaction with SIAH1, which contains a nuclear localization signal. Colocalizes with CHP1 to small punctate structures along the microtubules tracks.</text>
</comment>
<comment type="domain">
    <text evidence="1">The [IL]-x-C-x-x-[DE] motif is a proposed target motif for cysteine S-nitrosylation mediated by the iNOS-S100A8/A9 transnitrosylase complex.</text>
</comment>
<comment type="PTM">
    <text evidence="1">ISGylated.</text>
</comment>
<comment type="PTM">
    <text evidence="1 2">S-nitrosylation of Cys-150 leads to interaction with SIAH1, followed by translocation to the nucleus S-nitrosylation of Cys-245 is induced by interferon-gamma and LDL(ox) implicating the iNOS-S100A8/9 transnitrosylase complex and seems to prevent interaction with phosphorylated RPL13A and to interfere with GAIT complex activity (By similarity).</text>
</comment>
<comment type="PTM">
    <text evidence="4">Sulfhydration at Cys-150 increases catalytic activity.</text>
</comment>
<comment type="PTM">
    <text evidence="1">Oxidative stress can promote the formation of high molecular weight disulfide-linked GAPDH aggregates, through a process called nucleocytoplasmic coagulation.</text>
</comment>
<comment type="similarity">
    <text evidence="7">Belongs to the glyceraldehyde-3-phosphate dehydrogenase family.</text>
</comment>
<organism>
    <name type="scientific">Felis catus</name>
    <name type="common">Cat</name>
    <name type="synonym">Felis silvestris catus</name>
    <dbReference type="NCBI Taxonomy" id="9685"/>
    <lineage>
        <taxon>Eukaryota</taxon>
        <taxon>Metazoa</taxon>
        <taxon>Chordata</taxon>
        <taxon>Craniata</taxon>
        <taxon>Vertebrata</taxon>
        <taxon>Euteleostomi</taxon>
        <taxon>Mammalia</taxon>
        <taxon>Eutheria</taxon>
        <taxon>Laurasiatheria</taxon>
        <taxon>Carnivora</taxon>
        <taxon>Feliformia</taxon>
        <taxon>Felidae</taxon>
        <taxon>Felinae</taxon>
        <taxon>Felis</taxon>
    </lineage>
</organism>
<name>G3P_FELCA</name>
<gene>
    <name type="primary">GAPDH</name>
    <name type="synonym">GAPD</name>
</gene>
<evidence type="ECO:0000250" key="1">
    <source>
        <dbReference type="UniProtKB" id="P04406"/>
    </source>
</evidence>
<evidence type="ECO:0000250" key="2">
    <source>
        <dbReference type="UniProtKB" id="P04797"/>
    </source>
</evidence>
<evidence type="ECO:0000250" key="3">
    <source>
        <dbReference type="UniProtKB" id="P10096"/>
    </source>
</evidence>
<evidence type="ECO:0000250" key="4">
    <source>
        <dbReference type="UniProtKB" id="P16858"/>
    </source>
</evidence>
<evidence type="ECO:0000250" key="5">
    <source>
        <dbReference type="UniProtKB" id="P22513"/>
    </source>
</evidence>
<evidence type="ECO:0000255" key="6">
    <source>
        <dbReference type="PROSITE-ProRule" id="PRU10009"/>
    </source>
</evidence>
<evidence type="ECO:0000305" key="7"/>